<organism>
    <name type="scientific">Streptococcus mutans serotype c (strain ATCC 700610 / UA159)</name>
    <dbReference type="NCBI Taxonomy" id="210007"/>
    <lineage>
        <taxon>Bacteria</taxon>
        <taxon>Bacillati</taxon>
        <taxon>Bacillota</taxon>
        <taxon>Bacilli</taxon>
        <taxon>Lactobacillales</taxon>
        <taxon>Streptococcaceae</taxon>
        <taxon>Streptococcus</taxon>
    </lineage>
</organism>
<accession>Q8DTY0</accession>
<reference key="1">
    <citation type="journal article" date="2002" name="Proc. Natl. Acad. Sci. U.S.A.">
        <title>Genome sequence of Streptococcus mutans UA159, a cariogenic dental pathogen.</title>
        <authorList>
            <person name="Ajdic D.J."/>
            <person name="McShan W.M."/>
            <person name="McLaughlin R.E."/>
            <person name="Savic G."/>
            <person name="Chang J."/>
            <person name="Carson M.B."/>
            <person name="Primeaux C."/>
            <person name="Tian R."/>
            <person name="Kenton S."/>
            <person name="Jia H.G."/>
            <person name="Lin S.P."/>
            <person name="Qian Y."/>
            <person name="Li S."/>
            <person name="Zhu H."/>
            <person name="Najar F.Z."/>
            <person name="Lai H."/>
            <person name="White J."/>
            <person name="Roe B.A."/>
            <person name="Ferretti J.J."/>
        </authorList>
    </citation>
    <scope>NUCLEOTIDE SEQUENCE [LARGE SCALE GENOMIC DNA]</scope>
    <source>
        <strain>ATCC 700610 / UA159</strain>
    </source>
</reference>
<proteinExistence type="inferred from homology"/>
<gene>
    <name evidence="1" type="primary">glmS</name>
    <name type="ordered locus">SMU_1187</name>
</gene>
<name>GLMS_STRMU</name>
<dbReference type="EC" id="2.6.1.16" evidence="1"/>
<dbReference type="EMBL" id="AE014133">
    <property type="protein sequence ID" value="AAN58876.1"/>
    <property type="molecule type" value="Genomic_DNA"/>
</dbReference>
<dbReference type="RefSeq" id="NP_721570.1">
    <property type="nucleotide sequence ID" value="NC_004350.2"/>
</dbReference>
<dbReference type="RefSeq" id="WP_002262164.1">
    <property type="nucleotide sequence ID" value="NC_004350.2"/>
</dbReference>
<dbReference type="SMR" id="Q8DTY0"/>
<dbReference type="STRING" id="210007.SMU_1187"/>
<dbReference type="KEGG" id="smu:SMU_1187"/>
<dbReference type="PATRIC" id="fig|210007.7.peg.1064"/>
<dbReference type="eggNOG" id="COG0449">
    <property type="taxonomic scope" value="Bacteria"/>
</dbReference>
<dbReference type="HOGENOM" id="CLU_012520_7_1_9"/>
<dbReference type="OrthoDB" id="106547at2"/>
<dbReference type="PhylomeDB" id="Q8DTY0"/>
<dbReference type="Proteomes" id="UP000002512">
    <property type="component" value="Chromosome"/>
</dbReference>
<dbReference type="GO" id="GO:0005829">
    <property type="term" value="C:cytosol"/>
    <property type="evidence" value="ECO:0007669"/>
    <property type="project" value="TreeGrafter"/>
</dbReference>
<dbReference type="GO" id="GO:0097367">
    <property type="term" value="F:carbohydrate derivative binding"/>
    <property type="evidence" value="ECO:0007669"/>
    <property type="project" value="InterPro"/>
</dbReference>
<dbReference type="GO" id="GO:0004360">
    <property type="term" value="F:glutamine-fructose-6-phosphate transaminase (isomerizing) activity"/>
    <property type="evidence" value="ECO:0007669"/>
    <property type="project" value="UniProtKB-UniRule"/>
</dbReference>
<dbReference type="GO" id="GO:0005975">
    <property type="term" value="P:carbohydrate metabolic process"/>
    <property type="evidence" value="ECO:0007669"/>
    <property type="project" value="UniProtKB-UniRule"/>
</dbReference>
<dbReference type="GO" id="GO:0006002">
    <property type="term" value="P:fructose 6-phosphate metabolic process"/>
    <property type="evidence" value="ECO:0007669"/>
    <property type="project" value="TreeGrafter"/>
</dbReference>
<dbReference type="GO" id="GO:0006487">
    <property type="term" value="P:protein N-linked glycosylation"/>
    <property type="evidence" value="ECO:0007669"/>
    <property type="project" value="TreeGrafter"/>
</dbReference>
<dbReference type="GO" id="GO:0006047">
    <property type="term" value="P:UDP-N-acetylglucosamine metabolic process"/>
    <property type="evidence" value="ECO:0007669"/>
    <property type="project" value="TreeGrafter"/>
</dbReference>
<dbReference type="CDD" id="cd00714">
    <property type="entry name" value="GFAT"/>
    <property type="match status" value="1"/>
</dbReference>
<dbReference type="CDD" id="cd05008">
    <property type="entry name" value="SIS_GlmS_GlmD_1"/>
    <property type="match status" value="1"/>
</dbReference>
<dbReference type="CDD" id="cd05009">
    <property type="entry name" value="SIS_GlmS_GlmD_2"/>
    <property type="match status" value="1"/>
</dbReference>
<dbReference type="FunFam" id="3.40.50.10490:FF:000001">
    <property type="entry name" value="Glutamine--fructose-6-phosphate aminotransferase [isomerizing]"/>
    <property type="match status" value="1"/>
</dbReference>
<dbReference type="FunFam" id="3.40.50.10490:FF:000022">
    <property type="entry name" value="Glutamine--fructose-6-phosphate aminotransferase [isomerizing]"/>
    <property type="match status" value="1"/>
</dbReference>
<dbReference type="FunFam" id="3.60.20.10:FF:000006">
    <property type="entry name" value="Glutamine--fructose-6-phosphate aminotransferase [isomerizing]"/>
    <property type="match status" value="1"/>
</dbReference>
<dbReference type="Gene3D" id="3.40.50.10490">
    <property type="entry name" value="Glucose-6-phosphate isomerase like protein, domain 1"/>
    <property type="match status" value="2"/>
</dbReference>
<dbReference type="Gene3D" id="3.60.20.10">
    <property type="entry name" value="Glutamine Phosphoribosylpyrophosphate, subunit 1, domain 1"/>
    <property type="match status" value="1"/>
</dbReference>
<dbReference type="HAMAP" id="MF_00164">
    <property type="entry name" value="GlmS"/>
    <property type="match status" value="1"/>
</dbReference>
<dbReference type="InterPro" id="IPR017932">
    <property type="entry name" value="GATase_2_dom"/>
</dbReference>
<dbReference type="InterPro" id="IPR005855">
    <property type="entry name" value="GFAT"/>
</dbReference>
<dbReference type="InterPro" id="IPR047084">
    <property type="entry name" value="GFAT_N"/>
</dbReference>
<dbReference type="InterPro" id="IPR035466">
    <property type="entry name" value="GlmS/AgaS_SIS"/>
</dbReference>
<dbReference type="InterPro" id="IPR035490">
    <property type="entry name" value="GlmS/FrlB_SIS"/>
</dbReference>
<dbReference type="InterPro" id="IPR029055">
    <property type="entry name" value="Ntn_hydrolases_N"/>
</dbReference>
<dbReference type="InterPro" id="IPR001347">
    <property type="entry name" value="SIS_dom"/>
</dbReference>
<dbReference type="InterPro" id="IPR046348">
    <property type="entry name" value="SIS_dom_sf"/>
</dbReference>
<dbReference type="NCBIfam" id="TIGR01135">
    <property type="entry name" value="glmS"/>
    <property type="match status" value="1"/>
</dbReference>
<dbReference type="NCBIfam" id="NF001484">
    <property type="entry name" value="PRK00331.1"/>
    <property type="match status" value="1"/>
</dbReference>
<dbReference type="PANTHER" id="PTHR10937">
    <property type="entry name" value="GLUCOSAMINE--FRUCTOSE-6-PHOSPHATE AMINOTRANSFERASE, ISOMERIZING"/>
    <property type="match status" value="1"/>
</dbReference>
<dbReference type="PANTHER" id="PTHR10937:SF0">
    <property type="entry name" value="GLUTAMINE--FRUCTOSE-6-PHOSPHATE TRANSAMINASE (ISOMERIZING)"/>
    <property type="match status" value="1"/>
</dbReference>
<dbReference type="Pfam" id="PF13522">
    <property type="entry name" value="GATase_6"/>
    <property type="match status" value="1"/>
</dbReference>
<dbReference type="Pfam" id="PF01380">
    <property type="entry name" value="SIS"/>
    <property type="match status" value="2"/>
</dbReference>
<dbReference type="SUPFAM" id="SSF56235">
    <property type="entry name" value="N-terminal nucleophile aminohydrolases (Ntn hydrolases)"/>
    <property type="match status" value="1"/>
</dbReference>
<dbReference type="SUPFAM" id="SSF53697">
    <property type="entry name" value="SIS domain"/>
    <property type="match status" value="1"/>
</dbReference>
<dbReference type="PROSITE" id="PS51278">
    <property type="entry name" value="GATASE_TYPE_2"/>
    <property type="match status" value="1"/>
</dbReference>
<dbReference type="PROSITE" id="PS51464">
    <property type="entry name" value="SIS"/>
    <property type="match status" value="2"/>
</dbReference>
<comment type="function">
    <text evidence="1">Catalyzes the first step in hexosamine metabolism, converting fructose-6P into glucosamine-6P using glutamine as a nitrogen source.</text>
</comment>
<comment type="catalytic activity">
    <reaction evidence="1">
        <text>D-fructose 6-phosphate + L-glutamine = D-glucosamine 6-phosphate + L-glutamate</text>
        <dbReference type="Rhea" id="RHEA:13237"/>
        <dbReference type="ChEBI" id="CHEBI:29985"/>
        <dbReference type="ChEBI" id="CHEBI:58359"/>
        <dbReference type="ChEBI" id="CHEBI:58725"/>
        <dbReference type="ChEBI" id="CHEBI:61527"/>
        <dbReference type="EC" id="2.6.1.16"/>
    </reaction>
</comment>
<comment type="subunit">
    <text evidence="1">Homodimer.</text>
</comment>
<comment type="subcellular location">
    <subcellularLocation>
        <location evidence="1">Cytoplasm</location>
    </subcellularLocation>
</comment>
<evidence type="ECO:0000255" key="1">
    <source>
        <dbReference type="HAMAP-Rule" id="MF_00164"/>
    </source>
</evidence>
<protein>
    <recommendedName>
        <fullName evidence="1">Glutamine--fructose-6-phosphate aminotransferase [isomerizing]</fullName>
        <ecNumber evidence="1">2.6.1.16</ecNumber>
    </recommendedName>
    <alternativeName>
        <fullName evidence="1">D-fructose-6-phosphate amidotransferase</fullName>
    </alternativeName>
    <alternativeName>
        <fullName evidence="1">GFAT</fullName>
    </alternativeName>
    <alternativeName>
        <fullName evidence="1">Glucosamine-6-phosphate synthase</fullName>
    </alternativeName>
    <alternativeName>
        <fullName evidence="1">Hexosephosphate aminotransferase</fullName>
    </alternativeName>
    <alternativeName>
        <fullName evidence="1">L-glutamine--D-fructose-6-phosphate amidotransferase</fullName>
    </alternativeName>
</protein>
<sequence>MCGIVGVVGNRNATDILMQGLEKLEYRGYDSAGIYVINQPENGRLIKSVGRIADLRAKIGIDVAGSTGIGHTRWATHGQATEENAHPHASATGRLVLVHNGVIENYLQIKENYLAGHNLKGETDTEIAVHLIGQFVTDGLSVLESFKKALHIIEGSYAFALIDSQNPDIIYVAKNKSPLLIGLGEGYNMVCSDAMAMIRETNQFMEIHDKELVVLTKDTAQVSDYDGNPVERQAYTAELDLSDIGKGTYPYYMLKEIDEQPTVMRKLISTYANENGKLTVDPAIVKSVQEADRIYILAAGTSYNAGFASKSMIETLTDTPVELGIASEWGYNMPLLSKKPMFILLSQSGETADSRQVLVKANAMGVPSLTITNVPGSTLSREATYTMLLHAGPEIAVASTKAYTAQIAALAFLSKAVGEANGKKEALEFDLVHELSIVAQSIEASLSEREVIEKKVANLLATSRNAFYIGRGNDYYVAMEASLKLKEISYIQCEGFAAGELKHGTISLIEEGTPVLALISSSETVAAHTRGNIQEVAARGANVLTVVEEGLNKEEDDVVVNQVHPYLSSISMVIPTQLIAYYASLQRGLDVDKPRNLAKAVTVE</sequence>
<feature type="initiator methionine" description="Removed" evidence="1">
    <location>
        <position position="1"/>
    </location>
</feature>
<feature type="chain" id="PRO_0000135390" description="Glutamine--fructose-6-phosphate aminotransferase [isomerizing]">
    <location>
        <begin position="2"/>
        <end position="604"/>
    </location>
</feature>
<feature type="domain" description="Glutamine amidotransferase type-2" evidence="1">
    <location>
        <begin position="2"/>
        <end position="218"/>
    </location>
</feature>
<feature type="domain" description="SIS 1" evidence="1">
    <location>
        <begin position="284"/>
        <end position="423"/>
    </location>
</feature>
<feature type="domain" description="SIS 2" evidence="1">
    <location>
        <begin position="456"/>
        <end position="594"/>
    </location>
</feature>
<feature type="active site" description="Nucleophile; for GATase activity" evidence="1">
    <location>
        <position position="2"/>
    </location>
</feature>
<feature type="active site" description="For Fru-6P isomerization activity" evidence="1">
    <location>
        <position position="599"/>
    </location>
</feature>
<keyword id="KW-0032">Aminotransferase</keyword>
<keyword id="KW-0963">Cytoplasm</keyword>
<keyword id="KW-0315">Glutamine amidotransferase</keyword>
<keyword id="KW-1185">Reference proteome</keyword>
<keyword id="KW-0677">Repeat</keyword>
<keyword id="KW-0808">Transferase</keyword>